<reference key="1">
    <citation type="journal article" date="2002" name="Leuk. Res.">
        <title>The novel helicase homologue DDX32 is down-regulated in acute lymphoblastic leukemia.</title>
        <authorList>
            <person name="Abdelhaleem M."/>
        </authorList>
    </citation>
    <scope>NUCLEOTIDE SEQUENCE [MRNA] (ISOFORM 2)</scope>
</reference>
<reference key="2">
    <citation type="journal article" date="2005" name="Science">
        <title>The transcriptional landscape of the mammalian genome.</title>
        <authorList>
            <person name="Carninci P."/>
            <person name="Kasukawa T."/>
            <person name="Katayama S."/>
            <person name="Gough J."/>
            <person name="Frith M.C."/>
            <person name="Maeda N."/>
            <person name="Oyama R."/>
            <person name="Ravasi T."/>
            <person name="Lenhard B."/>
            <person name="Wells C."/>
            <person name="Kodzius R."/>
            <person name="Shimokawa K."/>
            <person name="Bajic V.B."/>
            <person name="Brenner S.E."/>
            <person name="Batalov S."/>
            <person name="Forrest A.R."/>
            <person name="Zavolan M."/>
            <person name="Davis M.J."/>
            <person name="Wilming L.G."/>
            <person name="Aidinis V."/>
            <person name="Allen J.E."/>
            <person name="Ambesi-Impiombato A."/>
            <person name="Apweiler R."/>
            <person name="Aturaliya R.N."/>
            <person name="Bailey T.L."/>
            <person name="Bansal M."/>
            <person name="Baxter L."/>
            <person name="Beisel K.W."/>
            <person name="Bersano T."/>
            <person name="Bono H."/>
            <person name="Chalk A.M."/>
            <person name="Chiu K.P."/>
            <person name="Choudhary V."/>
            <person name="Christoffels A."/>
            <person name="Clutterbuck D.R."/>
            <person name="Crowe M.L."/>
            <person name="Dalla E."/>
            <person name="Dalrymple B.P."/>
            <person name="de Bono B."/>
            <person name="Della Gatta G."/>
            <person name="di Bernardo D."/>
            <person name="Down T."/>
            <person name="Engstrom P."/>
            <person name="Fagiolini M."/>
            <person name="Faulkner G."/>
            <person name="Fletcher C.F."/>
            <person name="Fukushima T."/>
            <person name="Furuno M."/>
            <person name="Futaki S."/>
            <person name="Gariboldi M."/>
            <person name="Georgii-Hemming P."/>
            <person name="Gingeras T.R."/>
            <person name="Gojobori T."/>
            <person name="Green R.E."/>
            <person name="Gustincich S."/>
            <person name="Harbers M."/>
            <person name="Hayashi Y."/>
            <person name="Hensch T.K."/>
            <person name="Hirokawa N."/>
            <person name="Hill D."/>
            <person name="Huminiecki L."/>
            <person name="Iacono M."/>
            <person name="Ikeo K."/>
            <person name="Iwama A."/>
            <person name="Ishikawa T."/>
            <person name="Jakt M."/>
            <person name="Kanapin A."/>
            <person name="Katoh M."/>
            <person name="Kawasawa Y."/>
            <person name="Kelso J."/>
            <person name="Kitamura H."/>
            <person name="Kitano H."/>
            <person name="Kollias G."/>
            <person name="Krishnan S.P."/>
            <person name="Kruger A."/>
            <person name="Kummerfeld S.K."/>
            <person name="Kurochkin I.V."/>
            <person name="Lareau L.F."/>
            <person name="Lazarevic D."/>
            <person name="Lipovich L."/>
            <person name="Liu J."/>
            <person name="Liuni S."/>
            <person name="McWilliam S."/>
            <person name="Madan Babu M."/>
            <person name="Madera M."/>
            <person name="Marchionni L."/>
            <person name="Matsuda H."/>
            <person name="Matsuzawa S."/>
            <person name="Miki H."/>
            <person name="Mignone F."/>
            <person name="Miyake S."/>
            <person name="Morris K."/>
            <person name="Mottagui-Tabar S."/>
            <person name="Mulder N."/>
            <person name="Nakano N."/>
            <person name="Nakauchi H."/>
            <person name="Ng P."/>
            <person name="Nilsson R."/>
            <person name="Nishiguchi S."/>
            <person name="Nishikawa S."/>
            <person name="Nori F."/>
            <person name="Ohara O."/>
            <person name="Okazaki Y."/>
            <person name="Orlando V."/>
            <person name="Pang K.C."/>
            <person name="Pavan W.J."/>
            <person name="Pavesi G."/>
            <person name="Pesole G."/>
            <person name="Petrovsky N."/>
            <person name="Piazza S."/>
            <person name="Reed J."/>
            <person name="Reid J.F."/>
            <person name="Ring B.Z."/>
            <person name="Ringwald M."/>
            <person name="Rost B."/>
            <person name="Ruan Y."/>
            <person name="Salzberg S.L."/>
            <person name="Sandelin A."/>
            <person name="Schneider C."/>
            <person name="Schoenbach C."/>
            <person name="Sekiguchi K."/>
            <person name="Semple C.A."/>
            <person name="Seno S."/>
            <person name="Sessa L."/>
            <person name="Sheng Y."/>
            <person name="Shibata Y."/>
            <person name="Shimada H."/>
            <person name="Shimada K."/>
            <person name="Silva D."/>
            <person name="Sinclair B."/>
            <person name="Sperling S."/>
            <person name="Stupka E."/>
            <person name="Sugiura K."/>
            <person name="Sultana R."/>
            <person name="Takenaka Y."/>
            <person name="Taki K."/>
            <person name="Tammoja K."/>
            <person name="Tan S.L."/>
            <person name="Tang S."/>
            <person name="Taylor M.S."/>
            <person name="Tegner J."/>
            <person name="Teichmann S.A."/>
            <person name="Ueda H.R."/>
            <person name="van Nimwegen E."/>
            <person name="Verardo R."/>
            <person name="Wei C.L."/>
            <person name="Yagi K."/>
            <person name="Yamanishi H."/>
            <person name="Zabarovsky E."/>
            <person name="Zhu S."/>
            <person name="Zimmer A."/>
            <person name="Hide W."/>
            <person name="Bult C."/>
            <person name="Grimmond S.M."/>
            <person name="Teasdale R.D."/>
            <person name="Liu E.T."/>
            <person name="Brusic V."/>
            <person name="Quackenbush J."/>
            <person name="Wahlestedt C."/>
            <person name="Mattick J.S."/>
            <person name="Hume D.A."/>
            <person name="Kai C."/>
            <person name="Sasaki D."/>
            <person name="Tomaru Y."/>
            <person name="Fukuda S."/>
            <person name="Kanamori-Katayama M."/>
            <person name="Suzuki M."/>
            <person name="Aoki J."/>
            <person name="Arakawa T."/>
            <person name="Iida J."/>
            <person name="Imamura K."/>
            <person name="Itoh M."/>
            <person name="Kato T."/>
            <person name="Kawaji H."/>
            <person name="Kawagashira N."/>
            <person name="Kawashima T."/>
            <person name="Kojima M."/>
            <person name="Kondo S."/>
            <person name="Konno H."/>
            <person name="Nakano K."/>
            <person name="Ninomiya N."/>
            <person name="Nishio T."/>
            <person name="Okada M."/>
            <person name="Plessy C."/>
            <person name="Shibata K."/>
            <person name="Shiraki T."/>
            <person name="Suzuki S."/>
            <person name="Tagami M."/>
            <person name="Waki K."/>
            <person name="Watahiki A."/>
            <person name="Okamura-Oho Y."/>
            <person name="Suzuki H."/>
            <person name="Kawai J."/>
            <person name="Hayashizaki Y."/>
        </authorList>
    </citation>
    <scope>NUCLEOTIDE SEQUENCE [LARGE SCALE MRNA] (ISOFORMS 1 AND 2)</scope>
    <source>
        <strain>C57BL/6J</strain>
        <strain>NOD</strain>
        <tissue>Amnion</tissue>
        <tissue>Cecum</tissue>
        <tissue>Spleen</tissue>
    </source>
</reference>
<reference key="3">
    <citation type="journal article" date="2004" name="Genome Res.">
        <title>The status, quality, and expansion of the NIH full-length cDNA project: the Mammalian Gene Collection (MGC).</title>
        <authorList>
            <consortium name="The MGC Project Team"/>
        </authorList>
    </citation>
    <scope>NUCLEOTIDE SEQUENCE [LARGE SCALE MRNA] OF 4-744 (ISOFORM 1)</scope>
    <source>
        <strain>FVB/N</strain>
        <tissue>Mammary tumor</tissue>
    </source>
</reference>
<reference key="4">
    <citation type="journal article" date="2010" name="Cell">
        <title>A tissue-specific atlas of mouse protein phosphorylation and expression.</title>
        <authorList>
            <person name="Huttlin E.L."/>
            <person name="Jedrychowski M.P."/>
            <person name="Elias J.E."/>
            <person name="Goswami T."/>
            <person name="Rad R."/>
            <person name="Beausoleil S.A."/>
            <person name="Villen J."/>
            <person name="Haas W."/>
            <person name="Sowa M.E."/>
            <person name="Gygi S.P."/>
        </authorList>
    </citation>
    <scope>IDENTIFICATION BY MASS SPECTROMETRY [LARGE SCALE ANALYSIS]</scope>
    <source>
        <tissue>Brain</tissue>
        <tissue>Heart</tissue>
        <tissue>Kidney</tissue>
        <tissue>Liver</tissue>
        <tissue>Lung</tissue>
        <tissue>Pancreas</tissue>
        <tissue>Testis</tissue>
    </source>
</reference>
<accession>Q8BZS9</accession>
<accession>Q3TFU4</accession>
<accession>Q8VH39</accession>
<accession>Q922N6</accession>
<keyword id="KW-0007">Acetylation</keyword>
<keyword id="KW-0025">Alternative splicing</keyword>
<keyword id="KW-0067">ATP-binding</keyword>
<keyword id="KW-0347">Helicase</keyword>
<keyword id="KW-0378">Hydrolase</keyword>
<keyword id="KW-0496">Mitochondrion</keyword>
<keyword id="KW-0547">Nucleotide-binding</keyword>
<keyword id="KW-0539">Nucleus</keyword>
<keyword id="KW-1185">Reference proteome</keyword>
<gene>
    <name type="primary">Dhx32</name>
    <name type="synonym">Ddx32</name>
</gene>
<evidence type="ECO:0000250" key="1"/>
<evidence type="ECO:0000250" key="2">
    <source>
        <dbReference type="UniProtKB" id="Q7L7V1"/>
    </source>
</evidence>
<evidence type="ECO:0000256" key="3">
    <source>
        <dbReference type="SAM" id="MobiDB-lite"/>
    </source>
</evidence>
<evidence type="ECO:0000303" key="4">
    <source>
    </source>
</evidence>
<evidence type="ECO:0000303" key="5">
    <source>
    </source>
</evidence>
<evidence type="ECO:0000305" key="6"/>
<name>DHX32_MOUSE</name>
<comment type="catalytic activity">
    <reaction>
        <text>ATP + H2O = ADP + phosphate + H(+)</text>
        <dbReference type="Rhea" id="RHEA:13065"/>
        <dbReference type="ChEBI" id="CHEBI:15377"/>
        <dbReference type="ChEBI" id="CHEBI:15378"/>
        <dbReference type="ChEBI" id="CHEBI:30616"/>
        <dbReference type="ChEBI" id="CHEBI:43474"/>
        <dbReference type="ChEBI" id="CHEBI:456216"/>
        <dbReference type="EC" id="3.6.4.13"/>
    </reaction>
</comment>
<comment type="subcellular location">
    <subcellularLocation>
        <location evidence="1">Nucleus</location>
    </subcellularLocation>
    <subcellularLocation>
        <location evidence="1">Mitochondrion</location>
    </subcellularLocation>
</comment>
<comment type="alternative products">
    <event type="alternative splicing"/>
    <isoform>
        <id>Q8BZS9-1</id>
        <name>1</name>
        <sequence type="displayed"/>
    </isoform>
    <isoform>
        <id>Q8BZS9-2</id>
        <name>2</name>
        <sequence type="described" ref="VSP_026428"/>
    </isoform>
</comment>
<comment type="similarity">
    <text evidence="6">Belongs to the DEAD box helicase family. DEAH subfamily.</text>
</comment>
<protein>
    <recommendedName>
        <fullName>Putative pre-mRNA-splicing factor ATP-dependent RNA helicase DHX32</fullName>
        <ecNumber>3.6.4.13</ecNumber>
    </recommendedName>
    <alternativeName>
        <fullName>DEAH box protein 32</fullName>
    </alternativeName>
    <alternativeName>
        <fullName>MuDDX32</fullName>
    </alternativeName>
</protein>
<proteinExistence type="evidence at protein level"/>
<feature type="chain" id="PRO_0000292664" description="Putative pre-mRNA-splicing factor ATP-dependent RNA helicase DHX32">
    <location>
        <begin position="1"/>
        <end position="744"/>
    </location>
</feature>
<feature type="domain" description="Helicase ATP-binding">
    <location>
        <begin position="72"/>
        <end position="270"/>
    </location>
</feature>
<feature type="domain" description="Helicase C-terminal">
    <location>
        <begin position="258"/>
        <end position="438"/>
    </location>
</feature>
<feature type="region of interest" description="Disordered" evidence="3">
    <location>
        <begin position="1"/>
        <end position="28"/>
    </location>
</feature>
<feature type="short sequence motif" description="DEAH box">
    <location>
        <begin position="185"/>
        <end position="188"/>
    </location>
</feature>
<feature type="binding site" evidence="1">
    <location>
        <begin position="85"/>
        <end position="92"/>
    </location>
    <ligand>
        <name>ATP</name>
        <dbReference type="ChEBI" id="CHEBI:30616"/>
    </ligand>
</feature>
<feature type="modified residue" description="N-acetylmethionine" evidence="2">
    <location>
        <position position="1"/>
    </location>
</feature>
<feature type="splice variant" id="VSP_026428" description="In isoform 2." evidence="4 5">
    <original>M</original>
    <variation>MSSLREEM</variation>
    <location>
        <position position="1"/>
    </location>
</feature>
<feature type="sequence conflict" description="In Ref. 2; BAC28397." evidence="6" ref="2">
    <original>D</original>
    <variation>N</variation>
    <location>
        <position position="462"/>
    </location>
</feature>
<feature type="sequence conflict" description="In Ref. 3; BAE40804." evidence="6" ref="3">
    <original>G</original>
    <variation>E</variation>
    <location>
        <position position="479"/>
    </location>
</feature>
<dbReference type="EC" id="3.6.4.13"/>
<dbReference type="EMBL" id="AY065980">
    <property type="protein sequence ID" value="AAL47579.1"/>
    <property type="molecule type" value="mRNA"/>
</dbReference>
<dbReference type="EMBL" id="AK033624">
    <property type="protein sequence ID" value="BAC28397.1"/>
    <property type="molecule type" value="mRNA"/>
</dbReference>
<dbReference type="EMBL" id="AK169005">
    <property type="protein sequence ID" value="BAE40804.1"/>
    <property type="molecule type" value="mRNA"/>
</dbReference>
<dbReference type="EMBL" id="AK172504">
    <property type="protein sequence ID" value="BAE43038.1"/>
    <property type="molecule type" value="mRNA"/>
</dbReference>
<dbReference type="EMBL" id="BC006911">
    <property type="protein sequence ID" value="AAH06911.1"/>
    <property type="molecule type" value="mRNA"/>
</dbReference>
<dbReference type="EMBL" id="BC022920">
    <property type="protein sequence ID" value="AAH22920.1"/>
    <property type="molecule type" value="mRNA"/>
</dbReference>
<dbReference type="CCDS" id="CCDS21936.1">
    <molecule id="Q8BZS9-1"/>
</dbReference>
<dbReference type="RefSeq" id="NP_001272959.2">
    <molecule id="Q8BZS9-1"/>
    <property type="nucleotide sequence ID" value="NM_001286030.2"/>
</dbReference>
<dbReference type="RefSeq" id="NP_001272960.2">
    <molecule id="Q8BZS9-1"/>
    <property type="nucleotide sequence ID" value="NM_001286031.2"/>
</dbReference>
<dbReference type="RefSeq" id="NP_001272961.1">
    <property type="nucleotide sequence ID" value="NM_001286032.1"/>
</dbReference>
<dbReference type="RefSeq" id="NP_001390353.1">
    <molecule id="Q8BZS9-1"/>
    <property type="nucleotide sequence ID" value="NM_001403424.1"/>
</dbReference>
<dbReference type="RefSeq" id="NP_001390354.1">
    <molecule id="Q8BZS9-1"/>
    <property type="nucleotide sequence ID" value="NM_001403425.1"/>
</dbReference>
<dbReference type="RefSeq" id="NP_598702.2">
    <molecule id="Q8BZS9-1"/>
    <property type="nucleotide sequence ID" value="NM_133941.3"/>
</dbReference>
<dbReference type="RefSeq" id="XP_006507200.1">
    <property type="nucleotide sequence ID" value="XM_006507137.1"/>
</dbReference>
<dbReference type="RefSeq" id="XP_006507201.1">
    <property type="nucleotide sequence ID" value="XM_006507138.1"/>
</dbReference>
<dbReference type="SMR" id="Q8BZS9"/>
<dbReference type="BioGRID" id="221655">
    <property type="interactions" value="2"/>
</dbReference>
<dbReference type="FunCoup" id="Q8BZS9">
    <property type="interactions" value="113"/>
</dbReference>
<dbReference type="STRING" id="10090.ENSMUSP00000033290"/>
<dbReference type="iPTMnet" id="Q8BZS9"/>
<dbReference type="PhosphoSitePlus" id="Q8BZS9"/>
<dbReference type="SwissPalm" id="Q8BZS9"/>
<dbReference type="PaxDb" id="10090-ENSMUSP00000033290"/>
<dbReference type="ProteomicsDB" id="279653">
    <molecule id="Q8BZS9-1"/>
</dbReference>
<dbReference type="ProteomicsDB" id="279654">
    <molecule id="Q8BZS9-2"/>
</dbReference>
<dbReference type="Pumba" id="Q8BZS9"/>
<dbReference type="Antibodypedia" id="32435">
    <property type="antibodies" value="157 antibodies from 23 providers"/>
</dbReference>
<dbReference type="DNASU" id="101437"/>
<dbReference type="Ensembl" id="ENSMUST00000033290.12">
    <molecule id="Q8BZS9-1"/>
    <property type="protein sequence ID" value="ENSMUSP00000033290.7"/>
    <property type="gene ID" value="ENSMUSG00000030986.14"/>
</dbReference>
<dbReference type="Ensembl" id="ENSMUST00000063669.8">
    <molecule id="Q8BZS9-1"/>
    <property type="protein sequence ID" value="ENSMUSP00000066067.3"/>
    <property type="gene ID" value="ENSMUSG00000030986.14"/>
</dbReference>
<dbReference type="GeneID" id="101437"/>
<dbReference type="KEGG" id="mmu:101437"/>
<dbReference type="UCSC" id="uc009kdj.1">
    <molecule id="Q8BZS9-2"/>
    <property type="organism name" value="mouse"/>
</dbReference>
<dbReference type="UCSC" id="uc012fvg.1">
    <molecule id="Q8BZS9-1"/>
    <property type="organism name" value="mouse"/>
</dbReference>
<dbReference type="AGR" id="MGI:2141813"/>
<dbReference type="CTD" id="55760"/>
<dbReference type="MGI" id="MGI:2141813">
    <property type="gene designation" value="Dhx32"/>
</dbReference>
<dbReference type="VEuPathDB" id="HostDB:ENSMUSG00000030986"/>
<dbReference type="eggNOG" id="KOG0925">
    <property type="taxonomic scope" value="Eukaryota"/>
</dbReference>
<dbReference type="GeneTree" id="ENSGT00940000157227"/>
<dbReference type="HOGENOM" id="CLU_001832_5_11_1"/>
<dbReference type="InParanoid" id="Q8BZS9"/>
<dbReference type="OMA" id="CTQVHKP"/>
<dbReference type="PhylomeDB" id="Q8BZS9"/>
<dbReference type="TreeFam" id="TF105735"/>
<dbReference type="BioGRID-ORCS" id="101437">
    <property type="hits" value="0 hits in 78 CRISPR screens"/>
</dbReference>
<dbReference type="ChiTaRS" id="Dhx32">
    <property type="organism name" value="mouse"/>
</dbReference>
<dbReference type="PRO" id="PR:Q8BZS9"/>
<dbReference type="Proteomes" id="UP000000589">
    <property type="component" value="Chromosome 7"/>
</dbReference>
<dbReference type="RNAct" id="Q8BZS9">
    <property type="molecule type" value="protein"/>
</dbReference>
<dbReference type="Bgee" id="ENSMUSG00000030986">
    <property type="expression patterns" value="Expressed in epithelium of lens and 237 other cell types or tissues"/>
</dbReference>
<dbReference type="ExpressionAtlas" id="Q8BZS9">
    <property type="expression patterns" value="baseline and differential"/>
</dbReference>
<dbReference type="GO" id="GO:0005739">
    <property type="term" value="C:mitochondrion"/>
    <property type="evidence" value="ECO:0007669"/>
    <property type="project" value="UniProtKB-SubCell"/>
</dbReference>
<dbReference type="GO" id="GO:0005634">
    <property type="term" value="C:nucleus"/>
    <property type="evidence" value="ECO:0007669"/>
    <property type="project" value="UniProtKB-SubCell"/>
</dbReference>
<dbReference type="GO" id="GO:0005524">
    <property type="term" value="F:ATP binding"/>
    <property type="evidence" value="ECO:0007669"/>
    <property type="project" value="UniProtKB-KW"/>
</dbReference>
<dbReference type="GO" id="GO:0016887">
    <property type="term" value="F:ATP hydrolysis activity"/>
    <property type="evidence" value="ECO:0007669"/>
    <property type="project" value="RHEA"/>
</dbReference>
<dbReference type="GO" id="GO:0003724">
    <property type="term" value="F:RNA helicase activity"/>
    <property type="evidence" value="ECO:0007669"/>
    <property type="project" value="UniProtKB-EC"/>
</dbReference>
<dbReference type="CDD" id="cd17977">
    <property type="entry name" value="DEXHc_DHX32"/>
    <property type="match status" value="1"/>
</dbReference>
<dbReference type="CDD" id="cd18791">
    <property type="entry name" value="SF2_C_RHA"/>
    <property type="match status" value="1"/>
</dbReference>
<dbReference type="FunFam" id="1.20.120.1080:FF:000010">
    <property type="entry name" value="ATP-dependent RNA helicase DQX1 isoform X1"/>
    <property type="match status" value="1"/>
</dbReference>
<dbReference type="FunFam" id="3.40.50.300:FF:001007">
    <property type="entry name" value="putative pre-mRNA-splicing factor ATP-dependent RNA helicase DHX32"/>
    <property type="match status" value="1"/>
</dbReference>
<dbReference type="FunFam" id="3.40.50.300:FF:001055">
    <property type="entry name" value="putative pre-mRNA-splicing factor ATP-dependent RNA helicase DHX32"/>
    <property type="match status" value="1"/>
</dbReference>
<dbReference type="Gene3D" id="1.20.120.1080">
    <property type="match status" value="1"/>
</dbReference>
<dbReference type="Gene3D" id="3.40.50.300">
    <property type="entry name" value="P-loop containing nucleotide triphosphate hydrolases"/>
    <property type="match status" value="2"/>
</dbReference>
<dbReference type="InterPro" id="IPR011709">
    <property type="entry name" value="DEAD-box_helicase_OB_fold"/>
</dbReference>
<dbReference type="InterPro" id="IPR048333">
    <property type="entry name" value="HA2_WH"/>
</dbReference>
<dbReference type="InterPro" id="IPR007502">
    <property type="entry name" value="Helicase-assoc_dom"/>
</dbReference>
<dbReference type="InterPro" id="IPR027417">
    <property type="entry name" value="P-loop_NTPase"/>
</dbReference>
<dbReference type="PANTHER" id="PTHR18934">
    <property type="entry name" value="ATP-DEPENDENT RNA HELICASE"/>
    <property type="match status" value="1"/>
</dbReference>
<dbReference type="PANTHER" id="PTHR18934:SF88">
    <property type="entry name" value="PRE-MRNA-SPLICING FACTOR ATP-DEPENDENT RNA HELICASE DHX32-RELATED"/>
    <property type="match status" value="1"/>
</dbReference>
<dbReference type="Pfam" id="PF21010">
    <property type="entry name" value="HA2_C"/>
    <property type="match status" value="1"/>
</dbReference>
<dbReference type="Pfam" id="PF04408">
    <property type="entry name" value="HA2_N"/>
    <property type="match status" value="1"/>
</dbReference>
<dbReference type="Pfam" id="PF07717">
    <property type="entry name" value="OB_NTP_bind"/>
    <property type="match status" value="1"/>
</dbReference>
<dbReference type="SMART" id="SM00847">
    <property type="entry name" value="HA2"/>
    <property type="match status" value="1"/>
</dbReference>
<dbReference type="SUPFAM" id="SSF52540">
    <property type="entry name" value="P-loop containing nucleoside triphosphate hydrolases"/>
    <property type="match status" value="1"/>
</dbReference>
<organism>
    <name type="scientific">Mus musculus</name>
    <name type="common">Mouse</name>
    <dbReference type="NCBI Taxonomy" id="10090"/>
    <lineage>
        <taxon>Eukaryota</taxon>
        <taxon>Metazoa</taxon>
        <taxon>Chordata</taxon>
        <taxon>Craniata</taxon>
        <taxon>Vertebrata</taxon>
        <taxon>Euteleostomi</taxon>
        <taxon>Mammalia</taxon>
        <taxon>Eutheria</taxon>
        <taxon>Euarchontoglires</taxon>
        <taxon>Glires</taxon>
        <taxon>Rodentia</taxon>
        <taxon>Myomorpha</taxon>
        <taxon>Muroidea</taxon>
        <taxon>Muridae</taxon>
        <taxon>Murinae</taxon>
        <taxon>Mus</taxon>
        <taxon>Mus</taxon>
    </lineage>
</organism>
<sequence>MDEEELDHPNASPEKRYFPESLDSSDGDEEGVLACEDLELNPFDGLPYSSRYYKLLKEREELPIWKEKYSFMESLLQNQVVVVSGDSKCGKSSQVPQWCAEYCLSIHYQHGGVICTQAHKQTAVQLALRVADEMDVNIGHEVGYVIPFENCCTTETILRYCTDDMLQREMMSNPFLGSYGVIILDDVHERSLATDVLLGLLKDVLLARPELKLIVNCSPLLTSKLSSYYGDVPVIEVRNKHPVEVVYLSGAQKDSFESVIRLIFEIHRSGEKGDVVVFLACEQDIEKTYELVCQEGSNLNPDVGDLVVIPLYPKEKCSLFRPVDETEKRCQVYQRRVVLTTSCGESLIWSHTVKFVIDVGLERRQVYNPRIRANSLVLQPISQSQAEIRKQLLGSSPSGKLFCLYTEEFASKDMRPLKPAEMQEANLTSMVLFMKRVDIAGLGRCDFMNRPAPESLMQALEDLDYLAALDNDGNLSEFGIIMSEFPLDPQLSKSILASCEFDCVDEMLTIAAMVTAPSCFLHVPHGAEEAAVTCWKTFLHPEGDHFTLINVYNAYQDTVLNSANEHCVEMWCHDCFLSCSALRMADVIRAELLEIIKRIELPYAEPAFGSKENGLNIKKALLSGYFMQIARDVDGSGNYLMLTHKQVAQLHPLSSYSITKKMPEWVLFHQFSISENNYIRVASAVSPELFMQLVPQYYFSNLPPSESKDILQQAAGHLPTETVNKDQDVCDKCPDATEQRCTIQ</sequence>